<proteinExistence type="inferred from homology"/>
<dbReference type="EMBL" id="X17684">
    <property type="protein sequence ID" value="CAA35672.1"/>
    <property type="molecule type" value="Genomic_DNA"/>
</dbReference>
<dbReference type="PIR" id="A37992">
    <property type="entry name" value="TNBEEH"/>
</dbReference>
<dbReference type="GO" id="GO:0030430">
    <property type="term" value="C:host cell cytoplasm"/>
    <property type="evidence" value="ECO:0007669"/>
    <property type="project" value="UniProtKB-SubCell"/>
</dbReference>
<dbReference type="GO" id="GO:0042025">
    <property type="term" value="C:host cell nucleus"/>
    <property type="evidence" value="ECO:0007669"/>
    <property type="project" value="UniProtKB-SubCell"/>
</dbReference>
<dbReference type="GO" id="GO:0019033">
    <property type="term" value="C:viral tegument"/>
    <property type="evidence" value="ECO:0007669"/>
    <property type="project" value="UniProtKB-SubCell"/>
</dbReference>
<dbReference type="GO" id="GO:0006355">
    <property type="term" value="P:regulation of DNA-templated transcription"/>
    <property type="evidence" value="ECO:0007669"/>
    <property type="project" value="InterPro"/>
</dbReference>
<dbReference type="InterPro" id="IPR005029">
    <property type="entry name" value="Herpes_UL47"/>
</dbReference>
<dbReference type="Pfam" id="PF03362">
    <property type="entry name" value="Herpes_UL47"/>
    <property type="match status" value="1"/>
</dbReference>
<sequence length="872" mass="97377">MDQHHGVRGGAPIRRPRRSIETRSHPFRAAGNTQRTYSTPRLSYRDGLSGRASSLEPGGQAHDQNESSTQSTSNNQPSTSFWGYLRRVFSDDAPAQPQAPRSRADFAPPPEEDSSSEEEDEEGPSQAPLDEEDQLMYADQYSVGNSSDDNEEDYLQPEVEYPTSAESGEYHNSGMFAEEEPESESESDMENYETYEENDTEVISDDSHRLTRTWLDRSIRLMDDALAQSSEISKAITKSTRRLYDSQFTPGGRGYKQTETPSQRLVHLSRAGMYDSDEIVMTGDYMEVDDDPNSAYQSWVRAIHHPVAMNPSWEETISNHTNTSFSADIDYDIDELIEMNLARTPPVFEGLLDSADFFYRLPMLYTYATITQDEAYEERQAWSNTQALHGHEQSSWPALVSDYSKGGMYVSPTQEPRGIWRRALKQAMALQLKLCVLGLTEFVTKRELTQHHSAVTFLVDSLLRTAKNCYLASRLLVFAWERRRETGVRRPAEPLIALSGVTLLQPLPPEVSELLEQRTFDIGLRTPQSGVFRAFFGPLVYWAELRRALRDPAAINCRYVGFHLQTSEIYLLARAHSASPGYTKEELVAMEATLTLGTLMLEVALQWIHVASAQLLSENDALKAFRRVSASIPHALAPLGSIRLHDAEFEVLSNPDVMVARDETALSQALFLGYFSVRTALTACMRDYANEVDGGSKETVTGLFLGVGLIIQRLAGHMNFLLNCMAGAALYGGSKIAIHSLTLPRYSLLADVMAPMLQQQSLVDFWRARDDMLEELEITPRPGPPTQGKRVVLEMPLPSDDLPAMTPSGQVNNGAGLGRMVDMAKHLQHYRETIIGDDASSSVGKRGLMKSGVGVRHALEAEKVIRYSPKST</sequence>
<organismHost>
    <name type="scientific">Equus caballus</name>
    <name type="common">Horse</name>
    <dbReference type="NCBI Taxonomy" id="9796"/>
</organismHost>
<comment type="function">
    <text evidence="2">Tegument protein that can bind to various RNA transcripts. Plays a role in the attenuation of selective viral and cellular mRNA degradation by modulating the activity of host shutoff RNase UL41/VHS. Also plays a role in the primary envelopment of virions in the perinuclear space, probably by interacting with two nuclear egress proteins UL31 and UL34.</text>
</comment>
<comment type="subunit">
    <text evidence="2">Interacts with US3 kinase. Interacts with UL31 and UL34; these interactions seem important for efficient virion nuclear egress. Interacts with UL41/VHS.</text>
</comment>
<comment type="subcellular location">
    <subcellularLocation>
        <location evidence="2">Virion tegument</location>
    </subcellularLocation>
    <subcellularLocation>
        <location evidence="2">Host nucleus</location>
    </subcellularLocation>
    <subcellularLocation>
        <location evidence="2">Host cytoplasm</location>
    </subcellularLocation>
    <text evidence="2">Major tegument protein of the virion. Undergoes nucleocytoplasmic shuttling during infection. Localizes to the major sites of transcription in the infected cell nucleus.</text>
</comment>
<comment type="domain">
    <text evidence="2">The nuclear export signal is CRM1-dependent.</text>
</comment>
<comment type="PTM">
    <text evidence="2">Phosphorylated by US3. This phosphorylation is required for proper nuclear localization.</text>
</comment>
<comment type="PTM">
    <text>O-glycosylated.</text>
</comment>
<comment type="miscellaneous">
    <text evidence="1">Expressed in late in the infection.</text>
</comment>
<comment type="similarity">
    <text evidence="5">Belongs to the alphaherpesvirinae HHV-1 UL47 family.</text>
</comment>
<accession>P25073</accession>
<name>TEG5_EHV4</name>
<gene>
    <name type="primary">13</name>
    <name type="synonym">B6</name>
</gene>
<reference key="1">
    <citation type="journal article" date="1991" name="J. Virol.">
        <title>Antigenic and protein sequence homology between VP13/14, a herpes simplex virus type 1 tegument protein, and gp10, a glycoprotein of equine herpesvirus 1 and 4.</title>
        <authorList>
            <person name="Whittaker G.R."/>
            <person name="Riggio M.P."/>
            <person name="Halliburton I.W."/>
            <person name="Killington R.A."/>
            <person name="Allen G.P."/>
            <person name="Meredith D.M."/>
        </authorList>
    </citation>
    <scope>NUCLEOTIDE SEQUENCE [GENOMIC DNA]</scope>
</reference>
<evidence type="ECO:0000250" key="1"/>
<evidence type="ECO:0000250" key="2">
    <source>
        <dbReference type="UniProtKB" id="P10231"/>
    </source>
</evidence>
<evidence type="ECO:0000255" key="3"/>
<evidence type="ECO:0000256" key="4">
    <source>
        <dbReference type="SAM" id="MobiDB-lite"/>
    </source>
</evidence>
<evidence type="ECO:0000305" key="5"/>
<organism>
    <name type="scientific">Equine herpesvirus 4 (strain 1942)</name>
    <name type="common">EHV-4</name>
    <name type="synonym">Equine rhinopneumonitis virus</name>
    <dbReference type="NCBI Taxonomy" id="10333"/>
    <lineage>
        <taxon>Viruses</taxon>
        <taxon>Duplodnaviria</taxon>
        <taxon>Heunggongvirae</taxon>
        <taxon>Peploviricota</taxon>
        <taxon>Herviviricetes</taxon>
        <taxon>Herpesvirales</taxon>
        <taxon>Orthoherpesviridae</taxon>
        <taxon>Alphaherpesvirinae</taxon>
        <taxon>Varicellovirus</taxon>
        <taxon>Varicellovirus equidalpha4</taxon>
        <taxon>Equid alphaherpesvirus 4</taxon>
    </lineage>
</organism>
<keyword id="KW-0325">Glycoprotein</keyword>
<keyword id="KW-1035">Host cytoplasm</keyword>
<keyword id="KW-1048">Host nucleus</keyword>
<keyword id="KW-0426">Late protein</keyword>
<keyword id="KW-0804">Transcription</keyword>
<keyword id="KW-0805">Transcription regulation</keyword>
<keyword id="KW-0946">Virion</keyword>
<keyword id="KW-0920">Virion tegument</keyword>
<feature type="chain" id="PRO_0000116079" description="Tegument protein UL47 homolog">
    <location>
        <begin position="1"/>
        <end position="872"/>
    </location>
</feature>
<feature type="region of interest" description="Disordered" evidence="4">
    <location>
        <begin position="1"/>
        <end position="206"/>
    </location>
</feature>
<feature type="short sequence motif" description="Nuclear localization signal" evidence="3">
    <location>
        <begin position="13"/>
        <end position="33"/>
    </location>
</feature>
<feature type="compositionally biased region" description="Polar residues" evidence="4">
    <location>
        <begin position="31"/>
        <end position="41"/>
    </location>
</feature>
<feature type="compositionally biased region" description="Low complexity" evidence="4">
    <location>
        <begin position="66"/>
        <end position="80"/>
    </location>
</feature>
<feature type="compositionally biased region" description="Low complexity" evidence="4">
    <location>
        <begin position="91"/>
        <end position="101"/>
    </location>
</feature>
<feature type="compositionally biased region" description="Acidic residues" evidence="4">
    <location>
        <begin position="110"/>
        <end position="134"/>
    </location>
</feature>
<feature type="compositionally biased region" description="Acidic residues" evidence="4">
    <location>
        <begin position="177"/>
        <end position="204"/>
    </location>
</feature>
<protein>
    <recommendedName>
        <fullName>Tegument protein UL47 homolog</fullName>
    </recommendedName>
    <alternativeName>
        <fullName>GP10</fullName>
    </alternativeName>
</protein>